<proteinExistence type="inferred from homology"/>
<gene>
    <name evidence="1" type="primary">rps7</name>
    <name type="ordered locus">Cmaq_1931</name>
</gene>
<organism>
    <name type="scientific">Caldivirga maquilingensis (strain ATCC 700844 / DSM 13496 / JCM 10307 / IC-167)</name>
    <dbReference type="NCBI Taxonomy" id="397948"/>
    <lineage>
        <taxon>Archaea</taxon>
        <taxon>Thermoproteota</taxon>
        <taxon>Thermoprotei</taxon>
        <taxon>Thermoproteales</taxon>
        <taxon>Thermoproteaceae</taxon>
        <taxon>Caldivirga</taxon>
    </lineage>
</organism>
<dbReference type="EMBL" id="CP000852">
    <property type="protein sequence ID" value="ABW02748.1"/>
    <property type="status" value="ALT_INIT"/>
    <property type="molecule type" value="Genomic_DNA"/>
</dbReference>
<dbReference type="RefSeq" id="WP_048062815.1">
    <property type="nucleotide sequence ID" value="NC_009954.1"/>
</dbReference>
<dbReference type="SMR" id="A8MBL5"/>
<dbReference type="STRING" id="397948.Cmaq_1931"/>
<dbReference type="GeneID" id="5709558"/>
<dbReference type="KEGG" id="cma:Cmaq_1931"/>
<dbReference type="eggNOG" id="arCOG04254">
    <property type="taxonomic scope" value="Archaea"/>
</dbReference>
<dbReference type="HOGENOM" id="CLU_063975_0_0_2"/>
<dbReference type="OrthoDB" id="45346at2157"/>
<dbReference type="Proteomes" id="UP000001137">
    <property type="component" value="Chromosome"/>
</dbReference>
<dbReference type="GO" id="GO:0015935">
    <property type="term" value="C:small ribosomal subunit"/>
    <property type="evidence" value="ECO:0007669"/>
    <property type="project" value="InterPro"/>
</dbReference>
<dbReference type="GO" id="GO:0019843">
    <property type="term" value="F:rRNA binding"/>
    <property type="evidence" value="ECO:0007669"/>
    <property type="project" value="UniProtKB-UniRule"/>
</dbReference>
<dbReference type="GO" id="GO:0003735">
    <property type="term" value="F:structural constituent of ribosome"/>
    <property type="evidence" value="ECO:0007669"/>
    <property type="project" value="InterPro"/>
</dbReference>
<dbReference type="GO" id="GO:0006412">
    <property type="term" value="P:translation"/>
    <property type="evidence" value="ECO:0007669"/>
    <property type="project" value="UniProtKB-UniRule"/>
</dbReference>
<dbReference type="CDD" id="cd14867">
    <property type="entry name" value="uS7_Eukaryote"/>
    <property type="match status" value="1"/>
</dbReference>
<dbReference type="FunFam" id="1.10.455.10:FF:000011">
    <property type="entry name" value="30S ribosomal protein S7"/>
    <property type="match status" value="1"/>
</dbReference>
<dbReference type="Gene3D" id="1.10.455.10">
    <property type="entry name" value="Ribosomal protein S7 domain"/>
    <property type="match status" value="1"/>
</dbReference>
<dbReference type="HAMAP" id="MF_00480_A">
    <property type="entry name" value="Ribosomal_uS7_A"/>
    <property type="match status" value="1"/>
</dbReference>
<dbReference type="InterPro" id="IPR000235">
    <property type="entry name" value="Ribosomal_uS7"/>
</dbReference>
<dbReference type="InterPro" id="IPR026018">
    <property type="entry name" value="Ribosomal_uS7_arc"/>
</dbReference>
<dbReference type="InterPro" id="IPR020606">
    <property type="entry name" value="Ribosomal_uS7_CS"/>
</dbReference>
<dbReference type="InterPro" id="IPR023798">
    <property type="entry name" value="Ribosomal_uS7_dom"/>
</dbReference>
<dbReference type="InterPro" id="IPR036823">
    <property type="entry name" value="Ribosomal_uS7_dom_sf"/>
</dbReference>
<dbReference type="InterPro" id="IPR005716">
    <property type="entry name" value="Ribosomal_uS7_euk/arc"/>
</dbReference>
<dbReference type="NCBIfam" id="NF003106">
    <property type="entry name" value="PRK04027.1"/>
    <property type="match status" value="1"/>
</dbReference>
<dbReference type="NCBIfam" id="TIGR01028">
    <property type="entry name" value="uS7_euk_arch"/>
    <property type="match status" value="1"/>
</dbReference>
<dbReference type="PANTHER" id="PTHR11205">
    <property type="entry name" value="RIBOSOMAL PROTEIN S7"/>
    <property type="match status" value="1"/>
</dbReference>
<dbReference type="Pfam" id="PF00177">
    <property type="entry name" value="Ribosomal_S7"/>
    <property type="match status" value="1"/>
</dbReference>
<dbReference type="PIRSF" id="PIRSF002122">
    <property type="entry name" value="RPS7p_RPS7a_RPS5e_RPS7o"/>
    <property type="match status" value="1"/>
</dbReference>
<dbReference type="SUPFAM" id="SSF47973">
    <property type="entry name" value="Ribosomal protein S7"/>
    <property type="match status" value="1"/>
</dbReference>
<dbReference type="PROSITE" id="PS00052">
    <property type="entry name" value="RIBOSOMAL_S7"/>
    <property type="match status" value="1"/>
</dbReference>
<protein>
    <recommendedName>
        <fullName evidence="1">Small ribosomal subunit protein uS7</fullName>
    </recommendedName>
    <alternativeName>
        <fullName evidence="2">30S ribosomal protein S7</fullName>
    </alternativeName>
</protein>
<feature type="chain" id="PRO_0000344308" description="Small ribosomal subunit protein uS7">
    <location>
        <begin position="1"/>
        <end position="224"/>
    </location>
</feature>
<evidence type="ECO:0000255" key="1">
    <source>
        <dbReference type="HAMAP-Rule" id="MF_00480"/>
    </source>
</evidence>
<evidence type="ECO:0000305" key="2"/>
<keyword id="KW-1185">Reference proteome</keyword>
<keyword id="KW-0687">Ribonucleoprotein</keyword>
<keyword id="KW-0689">Ribosomal protein</keyword>
<keyword id="KW-0694">RNA-binding</keyword>
<keyword id="KW-0699">rRNA-binding</keyword>
<sequence length="224" mass="25118">MNPTVAQQLSKTTRVEELAPGIEIIEECPRDIKALDGSPILLFGKWNVNDVVIRDPGLRRYMCLKPMLLPHTEGKYQNRKFGKAMIPIIERMMNQLMKPGRNAGKKQKAYKILKTAFDIIYVATGKNPVQVFVDAVVNVAPREEITRVIYGGIAYPVSVDVGPTRRLDLAIRWIAEGARACSFNNPRPIEECLANEIIAAANNDPASYALRRRDEMERVAATAR</sequence>
<accession>A8MBL5</accession>
<reference key="1">
    <citation type="submission" date="2007-10" db="EMBL/GenBank/DDBJ databases">
        <title>Complete sequence of Caldivirga maquilingensis IC-167.</title>
        <authorList>
            <consortium name="US DOE Joint Genome Institute"/>
            <person name="Copeland A."/>
            <person name="Lucas S."/>
            <person name="Lapidus A."/>
            <person name="Barry K."/>
            <person name="Glavina del Rio T."/>
            <person name="Dalin E."/>
            <person name="Tice H."/>
            <person name="Pitluck S."/>
            <person name="Saunders E."/>
            <person name="Brettin T."/>
            <person name="Bruce D."/>
            <person name="Detter J.C."/>
            <person name="Han C."/>
            <person name="Schmutz J."/>
            <person name="Larimer F."/>
            <person name="Land M."/>
            <person name="Hauser L."/>
            <person name="Kyrpides N."/>
            <person name="Ivanova N."/>
            <person name="Biddle J.F."/>
            <person name="Zhang Z."/>
            <person name="Fitz-Gibbon S.T."/>
            <person name="Lowe T.M."/>
            <person name="Saltikov C."/>
            <person name="House C.H."/>
            <person name="Richardson P."/>
        </authorList>
    </citation>
    <scope>NUCLEOTIDE SEQUENCE [LARGE SCALE GENOMIC DNA]</scope>
    <source>
        <strain>ATCC 700844 / DSM 13496 / JCM 10307 / IC-167</strain>
    </source>
</reference>
<name>RS7_CALMQ</name>
<comment type="function">
    <text evidence="1">One of the primary rRNA binding proteins, it binds directly to 16S rRNA where it nucleates assembly of the head domain of the 30S subunit. Is located at the subunit interface close to the decoding center.</text>
</comment>
<comment type="subunit">
    <text evidence="1">Part of the 30S ribosomal subunit.</text>
</comment>
<comment type="similarity">
    <text evidence="1">Belongs to the universal ribosomal protein uS7 family.</text>
</comment>
<comment type="sequence caution" evidence="2">
    <conflict type="erroneous initiation">
        <sequence resource="EMBL-CDS" id="ABW02748"/>
    </conflict>
    <text>Extended N-terminus.</text>
</comment>